<proteinExistence type="evidence at protein level"/>
<comment type="function">
    <text evidence="2 3">Binds weakly to the muscarinic acetylcholine receptor (CHRM) (By similarity). Does not show inhibition on GABA(A) receptors (PubMed:33672715).</text>
</comment>
<comment type="subunit">
    <text evidence="2">Monomer.</text>
</comment>
<comment type="subcellular location">
    <subcellularLocation>
        <location evidence="2">Secreted</location>
    </subcellularLocation>
</comment>
<comment type="tissue specificity">
    <text evidence="2">Expressed by the venom gland.</text>
</comment>
<comment type="mass spectrometry" mass="7441.5" method="Electrospray" evidence="3"/>
<comment type="miscellaneous">
    <text evidence="2">Is classified as a P-type cytotoxin, since a proline residue stands at position 33 (Pro-31 in standard classification).</text>
</comment>
<comment type="similarity">
    <text evidence="5">Belongs to the three-finger toxin family. Short-chain subfamily. Type C muscarinic toxin sub-subfamily.</text>
</comment>
<comment type="caution">
    <text evidence="5">Has been partially sequenced. The missing C-terminal residues are assumed to be the same as in the orthologs and are therefore indicated in the sequence.</text>
</comment>
<dbReference type="SMR" id="P0DQQ3"/>
<dbReference type="GO" id="GO:0005576">
    <property type="term" value="C:extracellular region"/>
    <property type="evidence" value="ECO:0007669"/>
    <property type="project" value="UniProtKB-SubCell"/>
</dbReference>
<dbReference type="GO" id="GO:0090729">
    <property type="term" value="F:toxin activity"/>
    <property type="evidence" value="ECO:0007669"/>
    <property type="project" value="UniProtKB-KW"/>
</dbReference>
<dbReference type="CDD" id="cd00206">
    <property type="entry name" value="TFP_snake_toxin"/>
    <property type="match status" value="1"/>
</dbReference>
<dbReference type="FunFam" id="2.10.60.10:FF:000024">
    <property type="entry name" value="Cytotoxin 1"/>
    <property type="match status" value="1"/>
</dbReference>
<dbReference type="Gene3D" id="2.10.60.10">
    <property type="entry name" value="CD59"/>
    <property type="match status" value="1"/>
</dbReference>
<dbReference type="InterPro" id="IPR003571">
    <property type="entry name" value="Snake_3FTx"/>
</dbReference>
<dbReference type="InterPro" id="IPR045860">
    <property type="entry name" value="Snake_toxin-like_sf"/>
</dbReference>
<dbReference type="InterPro" id="IPR018354">
    <property type="entry name" value="Snake_toxin_con_site"/>
</dbReference>
<dbReference type="InterPro" id="IPR054131">
    <property type="entry name" value="Toxin_cobra-type"/>
</dbReference>
<dbReference type="Pfam" id="PF21947">
    <property type="entry name" value="Toxin_cobra-type"/>
    <property type="match status" value="1"/>
</dbReference>
<dbReference type="SUPFAM" id="SSF57302">
    <property type="entry name" value="Snake toxin-like"/>
    <property type="match status" value="1"/>
</dbReference>
<dbReference type="PROSITE" id="PS00272">
    <property type="entry name" value="SNAKE_TOXIN"/>
    <property type="match status" value="1"/>
</dbReference>
<evidence type="ECO:0000250" key="1">
    <source>
        <dbReference type="UniProtKB" id="P60301"/>
    </source>
</evidence>
<evidence type="ECO:0000250" key="2">
    <source>
        <dbReference type="UniProtKB" id="P82462"/>
    </source>
</evidence>
<evidence type="ECO:0000269" key="3">
    <source>
    </source>
</evidence>
<evidence type="ECO:0000303" key="4">
    <source>
    </source>
</evidence>
<evidence type="ECO:0000305" key="5"/>
<sequence length="65" mass="7366">LICVKEKFLFSETTETCPDGQNVCFNQAHLIYPGKYKRTRGCAATCPKLQNRDVIFCCSTDKCNL</sequence>
<keyword id="KW-0903">Direct protein sequencing</keyword>
<keyword id="KW-1015">Disulfide bond</keyword>
<keyword id="KW-1214">G-protein coupled acetylcholine receptor impairing toxin</keyword>
<keyword id="KW-1213">G-protein coupled receptor impairing toxin</keyword>
<keyword id="KW-0528">Neurotoxin</keyword>
<keyword id="KW-0629">Postsynaptic neurotoxin</keyword>
<keyword id="KW-0964">Secreted</keyword>
<keyword id="KW-0800">Toxin</keyword>
<organism>
    <name type="scientific">Naja melanoleuca</name>
    <name type="common">Forest cobra</name>
    <name type="synonym">Black-lipped cobra</name>
    <dbReference type="NCBI Taxonomy" id="8643"/>
    <lineage>
        <taxon>Eukaryota</taxon>
        <taxon>Metazoa</taxon>
        <taxon>Chordata</taxon>
        <taxon>Craniata</taxon>
        <taxon>Vertebrata</taxon>
        <taxon>Euteleostomi</taxon>
        <taxon>Lepidosauria</taxon>
        <taxon>Squamata</taxon>
        <taxon>Bifurcata</taxon>
        <taxon>Unidentata</taxon>
        <taxon>Episquamata</taxon>
        <taxon>Toxicofera</taxon>
        <taxon>Serpentes</taxon>
        <taxon>Colubroidea</taxon>
        <taxon>Elapidae</taxon>
        <taxon>Elapinae</taxon>
        <taxon>Naja</taxon>
    </lineage>
</organism>
<feature type="chain" id="PRO_0000453026" description="Muscarinic toxin-like protein Tx-NM3-2" evidence="3">
    <location>
        <begin position="1"/>
        <end position="65"/>
    </location>
</feature>
<feature type="disulfide bond" evidence="1">
    <location>
        <begin position="3"/>
        <end position="24"/>
    </location>
</feature>
<feature type="disulfide bond" evidence="1">
    <location>
        <begin position="17"/>
        <end position="42"/>
    </location>
</feature>
<feature type="disulfide bond" evidence="1">
    <location>
        <begin position="46"/>
        <end position="57"/>
    </location>
</feature>
<feature type="disulfide bond" evidence="1">
    <location>
        <begin position="58"/>
        <end position="63"/>
    </location>
</feature>
<feature type="unsure residue" description="Assigned by comparison with orthologs" evidence="2">
    <location>
        <begin position="63"/>
        <end position="65"/>
    </location>
</feature>
<protein>
    <recommendedName>
        <fullName evidence="4 5">Muscarinic toxin-like protein Tx-NM3-2</fullName>
    </recommendedName>
</protein>
<accession>P0DQQ3</accession>
<name>3SUC1_NAJME</name>
<reference key="1">
    <citation type="journal article" date="2021" name="Toxins">
        <title>Novel three-finger neurotoxins from Naja melanoleuca cobra venom interact with GABAA and nicotinic acetylcholine receptors.</title>
        <authorList>
            <person name="Son L."/>
            <person name="Kryukova E."/>
            <person name="Ziganshin R."/>
            <person name="Andreeva T."/>
            <person name="Kudryavtsev D."/>
            <person name="Kasheverov I."/>
            <person name="Tsetlin V."/>
            <person name="Utkin Y."/>
        </authorList>
    </citation>
    <scope>PROTEIN SEQUENCE</scope>
    <scope>FUNCTION</scope>
    <scope>SUBCELLULAR LOCATION</scope>
    <scope>MASS SPECTROMETRY</scope>
    <source>
        <tissue>Venom</tissue>
    </source>
</reference>